<feature type="chain" id="PRO_0000366564" description="Ribosomal RNA large subunit methyltransferase H">
    <location>
        <begin position="1"/>
        <end position="159"/>
    </location>
</feature>
<feature type="binding site" evidence="1">
    <location>
        <position position="76"/>
    </location>
    <ligand>
        <name>S-adenosyl-L-methionine</name>
        <dbReference type="ChEBI" id="CHEBI:59789"/>
    </ligand>
</feature>
<feature type="binding site" evidence="1">
    <location>
        <position position="108"/>
    </location>
    <ligand>
        <name>S-adenosyl-L-methionine</name>
        <dbReference type="ChEBI" id="CHEBI:59789"/>
    </ligand>
</feature>
<feature type="binding site" evidence="1">
    <location>
        <begin position="127"/>
        <end position="132"/>
    </location>
    <ligand>
        <name>S-adenosyl-L-methionine</name>
        <dbReference type="ChEBI" id="CHEBI:59789"/>
    </ligand>
</feature>
<dbReference type="EC" id="2.1.1.177" evidence="1"/>
<dbReference type="EMBL" id="AP009256">
    <property type="protein sequence ID" value="BAF39243.1"/>
    <property type="status" value="ALT_INIT"/>
    <property type="molecule type" value="Genomic_DNA"/>
</dbReference>
<dbReference type="RefSeq" id="WP_033499393.1">
    <property type="nucleotide sequence ID" value="NZ_CAXVNC010000001.1"/>
</dbReference>
<dbReference type="SMR" id="A1A0L0"/>
<dbReference type="STRING" id="367928.BAD_0462"/>
<dbReference type="PaxDb" id="1680-BADO_0478"/>
<dbReference type="GeneID" id="4556393"/>
<dbReference type="KEGG" id="bad:BAD_0462"/>
<dbReference type="HOGENOM" id="CLU_100552_0_0_11"/>
<dbReference type="Proteomes" id="UP000008702">
    <property type="component" value="Chromosome"/>
</dbReference>
<dbReference type="GO" id="GO:0005737">
    <property type="term" value="C:cytoplasm"/>
    <property type="evidence" value="ECO:0007669"/>
    <property type="project" value="UniProtKB-SubCell"/>
</dbReference>
<dbReference type="GO" id="GO:0070038">
    <property type="term" value="F:rRNA (pseudouridine-N3-)-methyltransferase activity"/>
    <property type="evidence" value="ECO:0007669"/>
    <property type="project" value="UniProtKB-UniRule"/>
</dbReference>
<dbReference type="CDD" id="cd18081">
    <property type="entry name" value="RlmH-like"/>
    <property type="match status" value="1"/>
</dbReference>
<dbReference type="Gene3D" id="3.40.1280.10">
    <property type="match status" value="1"/>
</dbReference>
<dbReference type="HAMAP" id="MF_00658">
    <property type="entry name" value="23SrRNA_methyltr_H"/>
    <property type="match status" value="1"/>
</dbReference>
<dbReference type="InterPro" id="IPR029028">
    <property type="entry name" value="Alpha/beta_knot_MTases"/>
</dbReference>
<dbReference type="InterPro" id="IPR003742">
    <property type="entry name" value="RlmH-like"/>
</dbReference>
<dbReference type="InterPro" id="IPR029026">
    <property type="entry name" value="tRNA_m1G_MTases_N"/>
</dbReference>
<dbReference type="NCBIfam" id="NF000985">
    <property type="entry name" value="PRK00103.1-3"/>
    <property type="match status" value="1"/>
</dbReference>
<dbReference type="NCBIfam" id="TIGR00246">
    <property type="entry name" value="tRNA_RlmH_YbeA"/>
    <property type="match status" value="1"/>
</dbReference>
<dbReference type="PANTHER" id="PTHR33603">
    <property type="entry name" value="METHYLTRANSFERASE"/>
    <property type="match status" value="1"/>
</dbReference>
<dbReference type="PANTHER" id="PTHR33603:SF1">
    <property type="entry name" value="RIBOSOMAL RNA LARGE SUBUNIT METHYLTRANSFERASE H"/>
    <property type="match status" value="1"/>
</dbReference>
<dbReference type="Pfam" id="PF02590">
    <property type="entry name" value="SPOUT_MTase"/>
    <property type="match status" value="1"/>
</dbReference>
<dbReference type="PIRSF" id="PIRSF004505">
    <property type="entry name" value="MT_bac"/>
    <property type="match status" value="1"/>
</dbReference>
<dbReference type="SUPFAM" id="SSF75217">
    <property type="entry name" value="alpha/beta knot"/>
    <property type="match status" value="1"/>
</dbReference>
<sequence>MKITLITVGKVKEKYLRDAIAEYSKRLGRYCKLGIVEVADEKTPEHASDGLERQIKAKEGERIAKHIRDDAFVIALAIEGKQLTSEQLAAKINDLGLHGTSHIQLIIGGSLGLDPAILKRADYLLSFSKMTFPHQLMRVILLEQIYRAYKINAGEPYHK</sequence>
<proteinExistence type="inferred from homology"/>
<comment type="function">
    <text evidence="1">Specifically methylates the pseudouridine at position 1915 (m3Psi1915) in 23S rRNA.</text>
</comment>
<comment type="catalytic activity">
    <reaction evidence="1">
        <text>pseudouridine(1915) in 23S rRNA + S-adenosyl-L-methionine = N(3)-methylpseudouridine(1915) in 23S rRNA + S-adenosyl-L-homocysteine + H(+)</text>
        <dbReference type="Rhea" id="RHEA:42752"/>
        <dbReference type="Rhea" id="RHEA-COMP:10221"/>
        <dbReference type="Rhea" id="RHEA-COMP:10222"/>
        <dbReference type="ChEBI" id="CHEBI:15378"/>
        <dbReference type="ChEBI" id="CHEBI:57856"/>
        <dbReference type="ChEBI" id="CHEBI:59789"/>
        <dbReference type="ChEBI" id="CHEBI:65314"/>
        <dbReference type="ChEBI" id="CHEBI:74486"/>
        <dbReference type="EC" id="2.1.1.177"/>
    </reaction>
</comment>
<comment type="subunit">
    <text evidence="1">Homodimer.</text>
</comment>
<comment type="subcellular location">
    <subcellularLocation>
        <location evidence="1">Cytoplasm</location>
    </subcellularLocation>
</comment>
<comment type="similarity">
    <text evidence="1">Belongs to the RNA methyltransferase RlmH family.</text>
</comment>
<comment type="sequence caution" evidence="2">
    <conflict type="erroneous initiation">
        <sequence resource="EMBL-CDS" id="BAF39243"/>
    </conflict>
</comment>
<organism>
    <name type="scientific">Bifidobacterium adolescentis (strain ATCC 15703 / DSM 20083 / NCTC 11814 / E194a)</name>
    <dbReference type="NCBI Taxonomy" id="367928"/>
    <lineage>
        <taxon>Bacteria</taxon>
        <taxon>Bacillati</taxon>
        <taxon>Actinomycetota</taxon>
        <taxon>Actinomycetes</taxon>
        <taxon>Bifidobacteriales</taxon>
        <taxon>Bifidobacteriaceae</taxon>
        <taxon>Bifidobacterium</taxon>
    </lineage>
</organism>
<name>RLMH_BIFAA</name>
<reference key="1">
    <citation type="submission" date="2006-12" db="EMBL/GenBank/DDBJ databases">
        <title>Bifidobacterium adolescentis complete genome sequence.</title>
        <authorList>
            <person name="Suzuki T."/>
            <person name="Tsuda Y."/>
            <person name="Kanou N."/>
            <person name="Inoue T."/>
            <person name="Kumazaki K."/>
            <person name="Nagano S."/>
            <person name="Hirai S."/>
            <person name="Tanaka K."/>
            <person name="Watanabe K."/>
        </authorList>
    </citation>
    <scope>NUCLEOTIDE SEQUENCE [LARGE SCALE GENOMIC DNA]</scope>
    <source>
        <strain>ATCC 15703 / DSM 20083 / NCTC 11814 / E194a</strain>
    </source>
</reference>
<protein>
    <recommendedName>
        <fullName evidence="1">Ribosomal RNA large subunit methyltransferase H</fullName>
        <ecNumber evidence="1">2.1.1.177</ecNumber>
    </recommendedName>
    <alternativeName>
        <fullName evidence="1">23S rRNA (pseudouridine1915-N3)-methyltransferase</fullName>
    </alternativeName>
    <alternativeName>
        <fullName evidence="1">23S rRNA m3Psi1915 methyltransferase</fullName>
    </alternativeName>
    <alternativeName>
        <fullName evidence="1">rRNA (pseudouridine-N3-)-methyltransferase RlmH</fullName>
    </alternativeName>
</protein>
<keyword id="KW-0963">Cytoplasm</keyword>
<keyword id="KW-0489">Methyltransferase</keyword>
<keyword id="KW-1185">Reference proteome</keyword>
<keyword id="KW-0698">rRNA processing</keyword>
<keyword id="KW-0949">S-adenosyl-L-methionine</keyword>
<keyword id="KW-0808">Transferase</keyword>
<accession>A1A0L0</accession>
<evidence type="ECO:0000255" key="1">
    <source>
        <dbReference type="HAMAP-Rule" id="MF_00658"/>
    </source>
</evidence>
<evidence type="ECO:0000305" key="2"/>
<gene>
    <name evidence="1" type="primary">rlmH</name>
    <name type="ordered locus">BAD_0462</name>
</gene>